<organism>
    <name type="scientific">Mus musculus</name>
    <name type="common">Mouse</name>
    <dbReference type="NCBI Taxonomy" id="10090"/>
    <lineage>
        <taxon>Eukaryota</taxon>
        <taxon>Metazoa</taxon>
        <taxon>Chordata</taxon>
        <taxon>Craniata</taxon>
        <taxon>Vertebrata</taxon>
        <taxon>Euteleostomi</taxon>
        <taxon>Mammalia</taxon>
        <taxon>Eutheria</taxon>
        <taxon>Euarchontoglires</taxon>
        <taxon>Glires</taxon>
        <taxon>Rodentia</taxon>
        <taxon>Myomorpha</taxon>
        <taxon>Muroidea</taxon>
        <taxon>Muridae</taxon>
        <taxon>Murinae</taxon>
        <taxon>Mus</taxon>
        <taxon>Mus</taxon>
    </lineage>
</organism>
<proteinExistence type="evidence at protein level"/>
<feature type="chain" id="PRO_0000314131" description="Transcription and mRNA export factor ENY2">
    <location>
        <begin position="1"/>
        <end position="101"/>
    </location>
</feature>
<feature type="cross-link" description="Glycyl lysine isopeptide (Lys-Gly) (interchain with G-Cter in SUMO2)" evidence="2">
    <location>
        <position position="74"/>
    </location>
</feature>
<protein>
    <recommendedName>
        <fullName evidence="3">Transcription and mRNA export factor ENY2</fullName>
    </recommendedName>
    <alternativeName>
        <fullName evidence="3">Enhancer of yellow 2 transcription factor homolog</fullName>
    </alternativeName>
</protein>
<comment type="function">
    <text evidence="1 2">Involved in mRNA export coupled transcription activation by association with both the TREX-2 and the SAGA complexes. The transcription regulatory histone acetylation (HAT) complex SAGA is a multiprotein complex that activates transcription by remodeling chromatin and mediating histone acetylation and deubiquitination. Within the SAGA complex, participates in a subcomplex that specifically deubiquitinates both histones H2A and H2B. The SAGA complex is recruited to specific gene promoters by activators such as MYC, where it is required for transcription. Required for nuclear receptor-mediated transactivation. As a component of the TREX-2 complex, involved in the export of mRNAs to the cytoplasm through the nuclear pores (By similarity).</text>
</comment>
<comment type="subunit">
    <text evidence="2 3">Component of the nuclear pore complex (NPC)-associated TREX-2 complex (transcription and export complex 2), composed of at least ENY2, the isoform GANP of the MCM3AP gene, PCID2, SEM1, and either centrin CETN2 or CETN3. TREX-2 contains 2 ENY2 chains. The TREX-2 complex also associates with ALYREF/ALY and with the nucleoporin NUP153 (By similarity). Component of some SAGA transcription coactivator-HAT complexes, at least composed of ATXN7, ATXN7L3, ENY2, GCN5L2, SUPT3H, TAF10, TRRAP and USP22. Within the SAGA complex, ENY2, ATXN7, ATXN7L3, and USP22 form an additional subcomplex of SAGA called the DUB module (deubiquitination module). Interacts with the RNA polymerase II subunit POLR2A (By similarity). Interacts with ATXN7L3B (By similarity).</text>
</comment>
<comment type="subcellular location">
    <subcellularLocation>
        <location evidence="3">Nucleus</location>
        <location evidence="3">Nucleoplasm</location>
    </subcellularLocation>
</comment>
<comment type="similarity">
    <text evidence="3">Belongs to the ENY2 family.</text>
</comment>
<sequence>MVVSKMNKDAQMRAAINQKLIETGERERLKELLRAKLIECGWKDQLKAHCKEVIKEKGLEHVTVDDLVAEITPKGRALVPDSVKKELLQRIRTFLAQHASL</sequence>
<gene>
    <name type="primary">Eny2</name>
</gene>
<dbReference type="EMBL" id="AF173297">
    <property type="protein sequence ID" value="AAF89830.1"/>
    <property type="molecule type" value="mRNA"/>
</dbReference>
<dbReference type="EMBL" id="AK032957">
    <property type="protein sequence ID" value="BAC28097.1"/>
    <property type="molecule type" value="mRNA"/>
</dbReference>
<dbReference type="EMBL" id="BC048361">
    <property type="protein sequence ID" value="AAH48361.1"/>
    <property type="molecule type" value="mRNA"/>
</dbReference>
<dbReference type="CCDS" id="CCDS27456.1"/>
<dbReference type="RefSeq" id="NP_778174.1">
    <property type="nucleotide sequence ID" value="NM_175009.4"/>
</dbReference>
<dbReference type="SMR" id="Q9JIX0"/>
<dbReference type="BioGRID" id="230155">
    <property type="interactions" value="10"/>
</dbReference>
<dbReference type="ComplexPortal" id="CPX-6803">
    <property type="entry name" value="SAGA complex, KAT2B variant"/>
</dbReference>
<dbReference type="ComplexPortal" id="CPX-916">
    <property type="entry name" value="TFTC histone acetylation complex"/>
</dbReference>
<dbReference type="ComplexPortal" id="CPX-920">
    <property type="entry name" value="SAGA complex, KAT2A variant"/>
</dbReference>
<dbReference type="FunCoup" id="Q9JIX0">
    <property type="interactions" value="3811"/>
</dbReference>
<dbReference type="IntAct" id="Q9JIX0">
    <property type="interactions" value="1"/>
</dbReference>
<dbReference type="MINT" id="Q9JIX0"/>
<dbReference type="STRING" id="10090.ENSMUSP00000052905"/>
<dbReference type="iPTMnet" id="Q9JIX0"/>
<dbReference type="PhosphoSitePlus" id="Q9JIX0"/>
<dbReference type="jPOST" id="Q9JIX0"/>
<dbReference type="PaxDb" id="10090-ENSMUSP00000052905"/>
<dbReference type="PeptideAtlas" id="Q9JIX0"/>
<dbReference type="ProteomicsDB" id="275923"/>
<dbReference type="Pumba" id="Q9JIX0"/>
<dbReference type="Antibodypedia" id="7042">
    <property type="antibodies" value="110 antibodies from 18 providers"/>
</dbReference>
<dbReference type="DNASU" id="223527"/>
<dbReference type="Ensembl" id="ENSMUST00000060652.5">
    <property type="protein sequence ID" value="ENSMUSP00000052905.4"/>
    <property type="gene ID" value="ENSMUSG00000022338.9"/>
</dbReference>
<dbReference type="GeneID" id="223527"/>
<dbReference type="KEGG" id="mmu:223527"/>
<dbReference type="UCSC" id="uc007vpu.1">
    <property type="organism name" value="mouse"/>
</dbReference>
<dbReference type="AGR" id="MGI:1919286"/>
<dbReference type="CTD" id="56943"/>
<dbReference type="MGI" id="MGI:1919286">
    <property type="gene designation" value="Eny2"/>
</dbReference>
<dbReference type="VEuPathDB" id="HostDB:ENSMUSG00000022338"/>
<dbReference type="eggNOG" id="KOG4479">
    <property type="taxonomic scope" value="Eukaryota"/>
</dbReference>
<dbReference type="GeneTree" id="ENSGT00390000011748"/>
<dbReference type="HOGENOM" id="CLU_134052_1_1_1"/>
<dbReference type="InParanoid" id="Q9JIX0"/>
<dbReference type="OrthoDB" id="50742at9989"/>
<dbReference type="PhylomeDB" id="Q9JIX0"/>
<dbReference type="TreeFam" id="TF326556"/>
<dbReference type="BioGRID-ORCS" id="223527">
    <property type="hits" value="25 hits in 79 CRISPR screens"/>
</dbReference>
<dbReference type="ChiTaRS" id="Eny2">
    <property type="organism name" value="mouse"/>
</dbReference>
<dbReference type="PRO" id="PR:Q9JIX0"/>
<dbReference type="Proteomes" id="UP000000589">
    <property type="component" value="Chromosome 15"/>
</dbReference>
<dbReference type="RNAct" id="Q9JIX0">
    <property type="molecule type" value="protein"/>
</dbReference>
<dbReference type="Bgee" id="ENSMUSG00000022338">
    <property type="expression patterns" value="Expressed in yolk sac and 260 other cell types or tissues"/>
</dbReference>
<dbReference type="ExpressionAtlas" id="Q9JIX0">
    <property type="expression patterns" value="baseline and differential"/>
</dbReference>
<dbReference type="GO" id="GO:0071819">
    <property type="term" value="C:DUBm complex"/>
    <property type="evidence" value="ECO:0000250"/>
    <property type="project" value="UniProtKB"/>
</dbReference>
<dbReference type="GO" id="GO:0044615">
    <property type="term" value="C:nuclear pore nuclear basket"/>
    <property type="evidence" value="ECO:0000250"/>
    <property type="project" value="UniProtKB"/>
</dbReference>
<dbReference type="GO" id="GO:0000124">
    <property type="term" value="C:SAGA complex"/>
    <property type="evidence" value="ECO:0000250"/>
    <property type="project" value="UniProtKB"/>
</dbReference>
<dbReference type="GO" id="GO:0070390">
    <property type="term" value="C:transcription export complex 2"/>
    <property type="evidence" value="ECO:0000250"/>
    <property type="project" value="UniProtKB"/>
</dbReference>
<dbReference type="GO" id="GO:0033276">
    <property type="term" value="C:transcription factor TFTC complex"/>
    <property type="evidence" value="ECO:0000303"/>
    <property type="project" value="ComplexPortal"/>
</dbReference>
<dbReference type="GO" id="GO:0003713">
    <property type="term" value="F:transcription coactivator activity"/>
    <property type="evidence" value="ECO:0000250"/>
    <property type="project" value="UniProtKB"/>
</dbReference>
<dbReference type="GO" id="GO:0006325">
    <property type="term" value="P:chromatin organization"/>
    <property type="evidence" value="ECO:0007669"/>
    <property type="project" value="UniProtKB-KW"/>
</dbReference>
<dbReference type="GO" id="GO:0016973">
    <property type="term" value="P:poly(A)+ mRNA export from nucleus"/>
    <property type="evidence" value="ECO:0000250"/>
    <property type="project" value="UniProtKB"/>
</dbReference>
<dbReference type="GO" id="GO:0045893">
    <property type="term" value="P:positive regulation of DNA-templated transcription"/>
    <property type="evidence" value="ECO:0000250"/>
    <property type="project" value="UniProtKB"/>
</dbReference>
<dbReference type="GO" id="GO:0015031">
    <property type="term" value="P:protein transport"/>
    <property type="evidence" value="ECO:0007669"/>
    <property type="project" value="UniProtKB-KW"/>
</dbReference>
<dbReference type="GO" id="GO:0006282">
    <property type="term" value="P:regulation of DNA repair"/>
    <property type="evidence" value="ECO:0000303"/>
    <property type="project" value="ComplexPortal"/>
</dbReference>
<dbReference type="GO" id="GO:0043484">
    <property type="term" value="P:regulation of RNA splicing"/>
    <property type="evidence" value="ECO:0000303"/>
    <property type="project" value="ComplexPortal"/>
</dbReference>
<dbReference type="GO" id="GO:0006357">
    <property type="term" value="P:regulation of transcription by RNA polymerase II"/>
    <property type="evidence" value="ECO:0000266"/>
    <property type="project" value="ComplexPortal"/>
</dbReference>
<dbReference type="GO" id="GO:0006368">
    <property type="term" value="P:transcription elongation by RNA polymerase II"/>
    <property type="evidence" value="ECO:0007669"/>
    <property type="project" value="UniProtKB-UniRule"/>
</dbReference>
<dbReference type="FunFam" id="1.10.246.140:FF:000001">
    <property type="entry name" value="Transcription and mRNA export factor ENY2"/>
    <property type="match status" value="1"/>
</dbReference>
<dbReference type="Gene3D" id="1.10.246.140">
    <property type="match status" value="1"/>
</dbReference>
<dbReference type="HAMAP" id="MF_03046">
    <property type="entry name" value="ENY2_Sus1"/>
    <property type="match status" value="1"/>
</dbReference>
<dbReference type="InterPro" id="IPR018783">
    <property type="entry name" value="TF_ENY2"/>
</dbReference>
<dbReference type="InterPro" id="IPR038212">
    <property type="entry name" value="TF_EnY2_sf"/>
</dbReference>
<dbReference type="PANTHER" id="PTHR12514">
    <property type="entry name" value="ENHANCER OF YELLOW 2 TRANSCRIPTION FACTOR"/>
    <property type="match status" value="1"/>
</dbReference>
<dbReference type="Pfam" id="PF10163">
    <property type="entry name" value="EnY2"/>
    <property type="match status" value="1"/>
</dbReference>
<accession>Q9JIX0</accession>
<name>ENY2_MOUSE</name>
<keyword id="KW-0010">Activator</keyword>
<keyword id="KW-0156">Chromatin regulator</keyword>
<keyword id="KW-1017">Isopeptide bond</keyword>
<keyword id="KW-0509">mRNA transport</keyword>
<keyword id="KW-0539">Nucleus</keyword>
<keyword id="KW-0653">Protein transport</keyword>
<keyword id="KW-1185">Reference proteome</keyword>
<keyword id="KW-0804">Transcription</keyword>
<keyword id="KW-0805">Transcription regulation</keyword>
<keyword id="KW-0811">Translocation</keyword>
<keyword id="KW-0813">Transport</keyword>
<keyword id="KW-0832">Ubl conjugation</keyword>
<evidence type="ECO:0000250" key="1"/>
<evidence type="ECO:0000250" key="2">
    <source>
        <dbReference type="UniProtKB" id="Q9NPA8"/>
    </source>
</evidence>
<evidence type="ECO:0000255" key="3">
    <source>
        <dbReference type="HAMAP-Rule" id="MF_03046"/>
    </source>
</evidence>
<reference key="1">
    <citation type="journal article" date="2001" name="Mol. Cell. Biol.">
        <title>The novel transcription factor e(y)2 interacts with TAF(II)40 and potentiates transcription activation on chromatin templates.</title>
        <authorList>
            <person name="Georgieva S."/>
            <person name="Nabirochkina E."/>
            <person name="Dilworth F.J."/>
            <person name="Eickhoff H."/>
            <person name="Becker P."/>
            <person name="Tora L."/>
            <person name="Georgiev P."/>
            <person name="Soldatov A."/>
        </authorList>
    </citation>
    <scope>NUCLEOTIDE SEQUENCE [MRNA]</scope>
</reference>
<reference key="2">
    <citation type="journal article" date="2005" name="Science">
        <title>The transcriptional landscape of the mammalian genome.</title>
        <authorList>
            <person name="Carninci P."/>
            <person name="Kasukawa T."/>
            <person name="Katayama S."/>
            <person name="Gough J."/>
            <person name="Frith M.C."/>
            <person name="Maeda N."/>
            <person name="Oyama R."/>
            <person name="Ravasi T."/>
            <person name="Lenhard B."/>
            <person name="Wells C."/>
            <person name="Kodzius R."/>
            <person name="Shimokawa K."/>
            <person name="Bajic V.B."/>
            <person name="Brenner S.E."/>
            <person name="Batalov S."/>
            <person name="Forrest A.R."/>
            <person name="Zavolan M."/>
            <person name="Davis M.J."/>
            <person name="Wilming L.G."/>
            <person name="Aidinis V."/>
            <person name="Allen J.E."/>
            <person name="Ambesi-Impiombato A."/>
            <person name="Apweiler R."/>
            <person name="Aturaliya R.N."/>
            <person name="Bailey T.L."/>
            <person name="Bansal M."/>
            <person name="Baxter L."/>
            <person name="Beisel K.W."/>
            <person name="Bersano T."/>
            <person name="Bono H."/>
            <person name="Chalk A.M."/>
            <person name="Chiu K.P."/>
            <person name="Choudhary V."/>
            <person name="Christoffels A."/>
            <person name="Clutterbuck D.R."/>
            <person name="Crowe M.L."/>
            <person name="Dalla E."/>
            <person name="Dalrymple B.P."/>
            <person name="de Bono B."/>
            <person name="Della Gatta G."/>
            <person name="di Bernardo D."/>
            <person name="Down T."/>
            <person name="Engstrom P."/>
            <person name="Fagiolini M."/>
            <person name="Faulkner G."/>
            <person name="Fletcher C.F."/>
            <person name="Fukushima T."/>
            <person name="Furuno M."/>
            <person name="Futaki S."/>
            <person name="Gariboldi M."/>
            <person name="Georgii-Hemming P."/>
            <person name="Gingeras T.R."/>
            <person name="Gojobori T."/>
            <person name="Green R.E."/>
            <person name="Gustincich S."/>
            <person name="Harbers M."/>
            <person name="Hayashi Y."/>
            <person name="Hensch T.K."/>
            <person name="Hirokawa N."/>
            <person name="Hill D."/>
            <person name="Huminiecki L."/>
            <person name="Iacono M."/>
            <person name="Ikeo K."/>
            <person name="Iwama A."/>
            <person name="Ishikawa T."/>
            <person name="Jakt M."/>
            <person name="Kanapin A."/>
            <person name="Katoh M."/>
            <person name="Kawasawa Y."/>
            <person name="Kelso J."/>
            <person name="Kitamura H."/>
            <person name="Kitano H."/>
            <person name="Kollias G."/>
            <person name="Krishnan S.P."/>
            <person name="Kruger A."/>
            <person name="Kummerfeld S.K."/>
            <person name="Kurochkin I.V."/>
            <person name="Lareau L.F."/>
            <person name="Lazarevic D."/>
            <person name="Lipovich L."/>
            <person name="Liu J."/>
            <person name="Liuni S."/>
            <person name="McWilliam S."/>
            <person name="Madan Babu M."/>
            <person name="Madera M."/>
            <person name="Marchionni L."/>
            <person name="Matsuda H."/>
            <person name="Matsuzawa S."/>
            <person name="Miki H."/>
            <person name="Mignone F."/>
            <person name="Miyake S."/>
            <person name="Morris K."/>
            <person name="Mottagui-Tabar S."/>
            <person name="Mulder N."/>
            <person name="Nakano N."/>
            <person name="Nakauchi H."/>
            <person name="Ng P."/>
            <person name="Nilsson R."/>
            <person name="Nishiguchi S."/>
            <person name="Nishikawa S."/>
            <person name="Nori F."/>
            <person name="Ohara O."/>
            <person name="Okazaki Y."/>
            <person name="Orlando V."/>
            <person name="Pang K.C."/>
            <person name="Pavan W.J."/>
            <person name="Pavesi G."/>
            <person name="Pesole G."/>
            <person name="Petrovsky N."/>
            <person name="Piazza S."/>
            <person name="Reed J."/>
            <person name="Reid J.F."/>
            <person name="Ring B.Z."/>
            <person name="Ringwald M."/>
            <person name="Rost B."/>
            <person name="Ruan Y."/>
            <person name="Salzberg S.L."/>
            <person name="Sandelin A."/>
            <person name="Schneider C."/>
            <person name="Schoenbach C."/>
            <person name="Sekiguchi K."/>
            <person name="Semple C.A."/>
            <person name="Seno S."/>
            <person name="Sessa L."/>
            <person name="Sheng Y."/>
            <person name="Shibata Y."/>
            <person name="Shimada H."/>
            <person name="Shimada K."/>
            <person name="Silva D."/>
            <person name="Sinclair B."/>
            <person name="Sperling S."/>
            <person name="Stupka E."/>
            <person name="Sugiura K."/>
            <person name="Sultana R."/>
            <person name="Takenaka Y."/>
            <person name="Taki K."/>
            <person name="Tammoja K."/>
            <person name="Tan S.L."/>
            <person name="Tang S."/>
            <person name="Taylor M.S."/>
            <person name="Tegner J."/>
            <person name="Teichmann S.A."/>
            <person name="Ueda H.R."/>
            <person name="van Nimwegen E."/>
            <person name="Verardo R."/>
            <person name="Wei C.L."/>
            <person name="Yagi K."/>
            <person name="Yamanishi H."/>
            <person name="Zabarovsky E."/>
            <person name="Zhu S."/>
            <person name="Zimmer A."/>
            <person name="Hide W."/>
            <person name="Bult C."/>
            <person name="Grimmond S.M."/>
            <person name="Teasdale R.D."/>
            <person name="Liu E.T."/>
            <person name="Brusic V."/>
            <person name="Quackenbush J."/>
            <person name="Wahlestedt C."/>
            <person name="Mattick J.S."/>
            <person name="Hume D.A."/>
            <person name="Kai C."/>
            <person name="Sasaki D."/>
            <person name="Tomaru Y."/>
            <person name="Fukuda S."/>
            <person name="Kanamori-Katayama M."/>
            <person name="Suzuki M."/>
            <person name="Aoki J."/>
            <person name="Arakawa T."/>
            <person name="Iida J."/>
            <person name="Imamura K."/>
            <person name="Itoh M."/>
            <person name="Kato T."/>
            <person name="Kawaji H."/>
            <person name="Kawagashira N."/>
            <person name="Kawashima T."/>
            <person name="Kojima M."/>
            <person name="Kondo S."/>
            <person name="Konno H."/>
            <person name="Nakano K."/>
            <person name="Ninomiya N."/>
            <person name="Nishio T."/>
            <person name="Okada M."/>
            <person name="Plessy C."/>
            <person name="Shibata K."/>
            <person name="Shiraki T."/>
            <person name="Suzuki S."/>
            <person name="Tagami M."/>
            <person name="Waki K."/>
            <person name="Watahiki A."/>
            <person name="Okamura-Oho Y."/>
            <person name="Suzuki H."/>
            <person name="Kawai J."/>
            <person name="Hayashizaki Y."/>
        </authorList>
    </citation>
    <scope>NUCLEOTIDE SEQUENCE [LARGE SCALE MRNA]</scope>
    <source>
        <strain>C57BL/6J</strain>
        <tissue>Wolffian duct</tissue>
    </source>
</reference>
<reference key="3">
    <citation type="journal article" date="2004" name="Genome Res.">
        <title>The status, quality, and expansion of the NIH full-length cDNA project: the Mammalian Gene Collection (MGC).</title>
        <authorList>
            <consortium name="The MGC Project Team"/>
        </authorList>
    </citation>
    <scope>NUCLEOTIDE SEQUENCE [LARGE SCALE MRNA]</scope>
    <source>
        <strain>Czech II</strain>
        <tissue>Mammary tumor</tissue>
    </source>
</reference>
<reference key="4">
    <citation type="journal article" date="2010" name="Cell">
        <title>A tissue-specific atlas of mouse protein phosphorylation and expression.</title>
        <authorList>
            <person name="Huttlin E.L."/>
            <person name="Jedrychowski M.P."/>
            <person name="Elias J.E."/>
            <person name="Goswami T."/>
            <person name="Rad R."/>
            <person name="Beausoleil S.A."/>
            <person name="Villen J."/>
            <person name="Haas W."/>
            <person name="Sowa M.E."/>
            <person name="Gygi S.P."/>
        </authorList>
    </citation>
    <scope>IDENTIFICATION BY MASS SPECTROMETRY [LARGE SCALE ANALYSIS]</scope>
    <source>
        <tissue>Brain</tissue>
        <tissue>Kidney</tissue>
        <tissue>Liver</tissue>
        <tissue>Pancreas</tissue>
        <tissue>Testis</tissue>
    </source>
</reference>